<proteinExistence type="inferred from homology"/>
<evidence type="ECO:0000255" key="1">
    <source>
        <dbReference type="HAMAP-Rule" id="MF_00060"/>
    </source>
</evidence>
<accession>B1KTK1</accession>
<protein>
    <recommendedName>
        <fullName evidence="1">5'-nucleotidase SurE</fullName>
        <ecNumber evidence="1">3.1.3.5</ecNumber>
    </recommendedName>
    <alternativeName>
        <fullName evidence="1">Nucleoside 5'-monophosphate phosphohydrolase</fullName>
    </alternativeName>
</protein>
<feature type="chain" id="PRO_1000091994" description="5'-nucleotidase SurE">
    <location>
        <begin position="1"/>
        <end position="252"/>
    </location>
</feature>
<feature type="binding site" evidence="1">
    <location>
        <position position="8"/>
    </location>
    <ligand>
        <name>a divalent metal cation</name>
        <dbReference type="ChEBI" id="CHEBI:60240"/>
    </ligand>
</feature>
<feature type="binding site" evidence="1">
    <location>
        <position position="9"/>
    </location>
    <ligand>
        <name>a divalent metal cation</name>
        <dbReference type="ChEBI" id="CHEBI:60240"/>
    </ligand>
</feature>
<feature type="binding site" evidence="1">
    <location>
        <position position="39"/>
    </location>
    <ligand>
        <name>a divalent metal cation</name>
        <dbReference type="ChEBI" id="CHEBI:60240"/>
    </ligand>
</feature>
<feature type="binding site" evidence="1">
    <location>
        <position position="95"/>
    </location>
    <ligand>
        <name>a divalent metal cation</name>
        <dbReference type="ChEBI" id="CHEBI:60240"/>
    </ligand>
</feature>
<reference key="1">
    <citation type="journal article" date="2007" name="PLoS ONE">
        <title>Analysis of the neurotoxin complex genes in Clostridium botulinum A1-A4 and B1 strains: BoNT/A3, /Ba4 and /B1 clusters are located within plasmids.</title>
        <authorList>
            <person name="Smith T.J."/>
            <person name="Hill K.K."/>
            <person name="Foley B.T."/>
            <person name="Detter J.C."/>
            <person name="Munk A.C."/>
            <person name="Bruce D.C."/>
            <person name="Doggett N.A."/>
            <person name="Smith L.A."/>
            <person name="Marks J.D."/>
            <person name="Xie G."/>
            <person name="Brettin T.S."/>
        </authorList>
    </citation>
    <scope>NUCLEOTIDE SEQUENCE [LARGE SCALE GENOMIC DNA]</scope>
    <source>
        <strain>Loch Maree / Type A3</strain>
    </source>
</reference>
<name>SURE_CLOBM</name>
<dbReference type="EC" id="3.1.3.5" evidence="1"/>
<dbReference type="EMBL" id="CP000962">
    <property type="protein sequence ID" value="ACA54104.1"/>
    <property type="molecule type" value="Genomic_DNA"/>
</dbReference>
<dbReference type="RefSeq" id="WP_012342250.1">
    <property type="nucleotide sequence ID" value="NC_010520.1"/>
</dbReference>
<dbReference type="SMR" id="B1KTK1"/>
<dbReference type="KEGG" id="cbl:CLK_3415"/>
<dbReference type="HOGENOM" id="CLU_045192_1_3_9"/>
<dbReference type="GO" id="GO:0005737">
    <property type="term" value="C:cytoplasm"/>
    <property type="evidence" value="ECO:0007669"/>
    <property type="project" value="UniProtKB-SubCell"/>
</dbReference>
<dbReference type="GO" id="GO:0008254">
    <property type="term" value="F:3'-nucleotidase activity"/>
    <property type="evidence" value="ECO:0007669"/>
    <property type="project" value="TreeGrafter"/>
</dbReference>
<dbReference type="GO" id="GO:0008253">
    <property type="term" value="F:5'-nucleotidase activity"/>
    <property type="evidence" value="ECO:0007669"/>
    <property type="project" value="UniProtKB-UniRule"/>
</dbReference>
<dbReference type="GO" id="GO:0004309">
    <property type="term" value="F:exopolyphosphatase activity"/>
    <property type="evidence" value="ECO:0007669"/>
    <property type="project" value="TreeGrafter"/>
</dbReference>
<dbReference type="GO" id="GO:0046872">
    <property type="term" value="F:metal ion binding"/>
    <property type="evidence" value="ECO:0007669"/>
    <property type="project" value="UniProtKB-UniRule"/>
</dbReference>
<dbReference type="GO" id="GO:0000166">
    <property type="term" value="F:nucleotide binding"/>
    <property type="evidence" value="ECO:0007669"/>
    <property type="project" value="UniProtKB-KW"/>
</dbReference>
<dbReference type="FunFam" id="3.40.1210.10:FF:000001">
    <property type="entry name" value="5'/3'-nucleotidase SurE"/>
    <property type="match status" value="1"/>
</dbReference>
<dbReference type="Gene3D" id="3.40.1210.10">
    <property type="entry name" value="Survival protein SurE-like phosphatase/nucleotidase"/>
    <property type="match status" value="1"/>
</dbReference>
<dbReference type="HAMAP" id="MF_00060">
    <property type="entry name" value="SurE"/>
    <property type="match status" value="1"/>
</dbReference>
<dbReference type="InterPro" id="IPR030048">
    <property type="entry name" value="SurE"/>
</dbReference>
<dbReference type="InterPro" id="IPR002828">
    <property type="entry name" value="SurE-like_Pase/nucleotidase"/>
</dbReference>
<dbReference type="InterPro" id="IPR036523">
    <property type="entry name" value="SurE-like_sf"/>
</dbReference>
<dbReference type="NCBIfam" id="NF001490">
    <property type="entry name" value="PRK00346.1-4"/>
    <property type="match status" value="1"/>
</dbReference>
<dbReference type="NCBIfam" id="NF010543">
    <property type="entry name" value="PRK13933.1"/>
    <property type="match status" value="1"/>
</dbReference>
<dbReference type="NCBIfam" id="TIGR00087">
    <property type="entry name" value="surE"/>
    <property type="match status" value="1"/>
</dbReference>
<dbReference type="PANTHER" id="PTHR30457">
    <property type="entry name" value="5'-NUCLEOTIDASE SURE"/>
    <property type="match status" value="1"/>
</dbReference>
<dbReference type="PANTHER" id="PTHR30457:SF12">
    <property type="entry name" value="5'_3'-NUCLEOTIDASE SURE"/>
    <property type="match status" value="1"/>
</dbReference>
<dbReference type="Pfam" id="PF01975">
    <property type="entry name" value="SurE"/>
    <property type="match status" value="1"/>
</dbReference>
<dbReference type="SUPFAM" id="SSF64167">
    <property type="entry name" value="SurE-like"/>
    <property type="match status" value="1"/>
</dbReference>
<comment type="function">
    <text evidence="1">Nucleotidase that shows phosphatase activity on nucleoside 5'-monophosphates.</text>
</comment>
<comment type="catalytic activity">
    <reaction evidence="1">
        <text>a ribonucleoside 5'-phosphate + H2O = a ribonucleoside + phosphate</text>
        <dbReference type="Rhea" id="RHEA:12484"/>
        <dbReference type="ChEBI" id="CHEBI:15377"/>
        <dbReference type="ChEBI" id="CHEBI:18254"/>
        <dbReference type="ChEBI" id="CHEBI:43474"/>
        <dbReference type="ChEBI" id="CHEBI:58043"/>
        <dbReference type="EC" id="3.1.3.5"/>
    </reaction>
</comment>
<comment type="cofactor">
    <cofactor evidence="1">
        <name>a divalent metal cation</name>
        <dbReference type="ChEBI" id="CHEBI:60240"/>
    </cofactor>
    <text evidence="1">Binds 1 divalent metal cation per subunit.</text>
</comment>
<comment type="subcellular location">
    <subcellularLocation>
        <location evidence="1">Cytoplasm</location>
    </subcellularLocation>
</comment>
<comment type="similarity">
    <text evidence="1">Belongs to the SurE nucleotidase family.</text>
</comment>
<sequence>MNILLTNDDGIEAEGINTLAELLSKYHNVTMVAPENQRSASSHSITIYEPIIVKQVKKPYNVEAYSISGTPADCVRVALDKLVPDNIDMVISGINKGLNIGNDILYSGTVSAAIEGAMYKVPSMAVSAQFIKNKKENYKIAAKYALGMLNRLKKEDLKNDVVLNLNIPFCSEEEIKGIKVCKVGNKIFNTRFLEEIDKEGNKILKLEGDINEDIYEGTDVYYIRNKYVTLTPLHYDLTNFNILEETEQLFLS</sequence>
<gene>
    <name evidence="1" type="primary">surE</name>
    <name type="ordered locus">CLK_3415</name>
</gene>
<keyword id="KW-0963">Cytoplasm</keyword>
<keyword id="KW-0378">Hydrolase</keyword>
<keyword id="KW-0479">Metal-binding</keyword>
<keyword id="KW-0547">Nucleotide-binding</keyword>
<organism>
    <name type="scientific">Clostridium botulinum (strain Loch Maree / Type A3)</name>
    <dbReference type="NCBI Taxonomy" id="498214"/>
    <lineage>
        <taxon>Bacteria</taxon>
        <taxon>Bacillati</taxon>
        <taxon>Bacillota</taxon>
        <taxon>Clostridia</taxon>
        <taxon>Eubacteriales</taxon>
        <taxon>Clostridiaceae</taxon>
        <taxon>Clostridium</taxon>
    </lineage>
</organism>